<evidence type="ECO:0000255" key="1">
    <source>
        <dbReference type="HAMAP-Rule" id="MF_01302"/>
    </source>
</evidence>
<evidence type="ECO:0000305" key="2"/>
<name>RS8_LACH4</name>
<keyword id="KW-0687">Ribonucleoprotein</keyword>
<keyword id="KW-0689">Ribosomal protein</keyword>
<keyword id="KW-0694">RNA-binding</keyword>
<keyword id="KW-0699">rRNA-binding</keyword>
<sequence length="132" mass="14546">MVMTDPIADYLTRIRNANMAKHDSVEIPASNIKKSISEILKREGFIRDYEVADDNKQGVIKVFLKYGPNGERVISGLKRISKPGLRNYVSAEDLPKVLNGLGIAIVSTSAGVITDKEARQKNVGGEVIAYVW</sequence>
<gene>
    <name evidence="1" type="primary">rpsH</name>
    <name type="ordered locus">lhv_0326</name>
</gene>
<proteinExistence type="inferred from homology"/>
<comment type="function">
    <text evidence="1">One of the primary rRNA binding proteins, it binds directly to 16S rRNA central domain where it helps coordinate assembly of the platform of the 30S subunit.</text>
</comment>
<comment type="subunit">
    <text evidence="1">Part of the 30S ribosomal subunit. Contacts proteins S5 and S12.</text>
</comment>
<comment type="similarity">
    <text evidence="1">Belongs to the universal ribosomal protein uS8 family.</text>
</comment>
<reference key="1">
    <citation type="journal article" date="2008" name="J. Bacteriol.">
        <title>Genome sequence of Lactobacillus helveticus: an organism distinguished by selective gene loss and IS element expansion.</title>
        <authorList>
            <person name="Callanan M."/>
            <person name="Kaleta P."/>
            <person name="O'Callaghan J."/>
            <person name="O'Sullivan O."/>
            <person name="Jordan K."/>
            <person name="McAuliffe O."/>
            <person name="Sangrador-Vegas A."/>
            <person name="Slattery L."/>
            <person name="Fitzgerald G.F."/>
            <person name="Beresford T."/>
            <person name="Ross R.P."/>
        </authorList>
    </citation>
    <scope>NUCLEOTIDE SEQUENCE [LARGE SCALE GENOMIC DNA]</scope>
    <source>
        <strain>DPC 4571</strain>
    </source>
</reference>
<feature type="chain" id="PRO_1000073193" description="Small ribosomal subunit protein uS8">
    <location>
        <begin position="1"/>
        <end position="132"/>
    </location>
</feature>
<protein>
    <recommendedName>
        <fullName evidence="1">Small ribosomal subunit protein uS8</fullName>
    </recommendedName>
    <alternativeName>
        <fullName evidence="2">30S ribosomal protein S8</fullName>
    </alternativeName>
</protein>
<accession>A8YXL9</accession>
<dbReference type="EMBL" id="CP000517">
    <property type="protein sequence ID" value="ABX26550.1"/>
    <property type="molecule type" value="Genomic_DNA"/>
</dbReference>
<dbReference type="RefSeq" id="WP_003625802.1">
    <property type="nucleotide sequence ID" value="NC_010080.1"/>
</dbReference>
<dbReference type="SMR" id="A8YXL9"/>
<dbReference type="GeneID" id="83725533"/>
<dbReference type="KEGG" id="lhe:lhv_0326"/>
<dbReference type="eggNOG" id="COG0096">
    <property type="taxonomic scope" value="Bacteria"/>
</dbReference>
<dbReference type="HOGENOM" id="CLU_098428_0_2_9"/>
<dbReference type="Proteomes" id="UP000000790">
    <property type="component" value="Chromosome"/>
</dbReference>
<dbReference type="GO" id="GO:1990904">
    <property type="term" value="C:ribonucleoprotein complex"/>
    <property type="evidence" value="ECO:0007669"/>
    <property type="project" value="UniProtKB-KW"/>
</dbReference>
<dbReference type="GO" id="GO:0005840">
    <property type="term" value="C:ribosome"/>
    <property type="evidence" value="ECO:0007669"/>
    <property type="project" value="UniProtKB-KW"/>
</dbReference>
<dbReference type="GO" id="GO:0019843">
    <property type="term" value="F:rRNA binding"/>
    <property type="evidence" value="ECO:0007669"/>
    <property type="project" value="UniProtKB-UniRule"/>
</dbReference>
<dbReference type="GO" id="GO:0003735">
    <property type="term" value="F:structural constituent of ribosome"/>
    <property type="evidence" value="ECO:0007669"/>
    <property type="project" value="InterPro"/>
</dbReference>
<dbReference type="GO" id="GO:0006412">
    <property type="term" value="P:translation"/>
    <property type="evidence" value="ECO:0007669"/>
    <property type="project" value="UniProtKB-UniRule"/>
</dbReference>
<dbReference type="FunFam" id="3.30.1370.30:FF:000002">
    <property type="entry name" value="30S ribosomal protein S8"/>
    <property type="match status" value="1"/>
</dbReference>
<dbReference type="FunFam" id="3.30.1490.10:FF:000001">
    <property type="entry name" value="30S ribosomal protein S8"/>
    <property type="match status" value="1"/>
</dbReference>
<dbReference type="Gene3D" id="3.30.1370.30">
    <property type="match status" value="1"/>
</dbReference>
<dbReference type="Gene3D" id="3.30.1490.10">
    <property type="match status" value="1"/>
</dbReference>
<dbReference type="HAMAP" id="MF_01302_B">
    <property type="entry name" value="Ribosomal_uS8_B"/>
    <property type="match status" value="1"/>
</dbReference>
<dbReference type="InterPro" id="IPR000630">
    <property type="entry name" value="Ribosomal_uS8"/>
</dbReference>
<dbReference type="InterPro" id="IPR047863">
    <property type="entry name" value="Ribosomal_uS8_CS"/>
</dbReference>
<dbReference type="InterPro" id="IPR035987">
    <property type="entry name" value="Ribosomal_uS8_sf"/>
</dbReference>
<dbReference type="NCBIfam" id="NF001109">
    <property type="entry name" value="PRK00136.1"/>
    <property type="match status" value="1"/>
</dbReference>
<dbReference type="PANTHER" id="PTHR11758">
    <property type="entry name" value="40S RIBOSOMAL PROTEIN S15A"/>
    <property type="match status" value="1"/>
</dbReference>
<dbReference type="Pfam" id="PF00410">
    <property type="entry name" value="Ribosomal_S8"/>
    <property type="match status" value="1"/>
</dbReference>
<dbReference type="SUPFAM" id="SSF56047">
    <property type="entry name" value="Ribosomal protein S8"/>
    <property type="match status" value="1"/>
</dbReference>
<dbReference type="PROSITE" id="PS00053">
    <property type="entry name" value="RIBOSOMAL_S8"/>
    <property type="match status" value="1"/>
</dbReference>
<organism>
    <name type="scientific">Lactobacillus helveticus (strain DPC 4571)</name>
    <dbReference type="NCBI Taxonomy" id="405566"/>
    <lineage>
        <taxon>Bacteria</taxon>
        <taxon>Bacillati</taxon>
        <taxon>Bacillota</taxon>
        <taxon>Bacilli</taxon>
        <taxon>Lactobacillales</taxon>
        <taxon>Lactobacillaceae</taxon>
        <taxon>Lactobacillus</taxon>
    </lineage>
</organism>